<proteinExistence type="evidence at protein level"/>
<keyword id="KW-0903">Direct protein sequencing</keyword>
<keyword id="KW-0527">Neuropeptide</keyword>
<keyword id="KW-0964">Secreted</keyword>
<evidence type="ECO:0000250" key="1">
    <source>
        <dbReference type="UniProtKB" id="P34405"/>
    </source>
</evidence>
<evidence type="ECO:0000255" key="2"/>
<evidence type="ECO:0000269" key="3">
    <source>
    </source>
</evidence>
<evidence type="ECO:0000303" key="4">
    <source>
    </source>
</evidence>
<evidence type="ECO:0000305" key="5"/>
<evidence type="ECO:0000305" key="6">
    <source>
    </source>
</evidence>
<organism>
    <name type="scientific">Striatophasma naukluftense</name>
    <name type="common">Gladiator</name>
    <name type="synonym">Heel-walker</name>
    <dbReference type="NCBI Taxonomy" id="1041429"/>
    <lineage>
        <taxon>Eukaryota</taxon>
        <taxon>Metazoa</taxon>
        <taxon>Ecdysozoa</taxon>
        <taxon>Arthropoda</taxon>
        <taxon>Hexapoda</taxon>
        <taxon>Insecta</taxon>
        <taxon>Pterygota</taxon>
        <taxon>Neoptera</taxon>
        <taxon>Polyneoptera</taxon>
        <taxon>Mantophasmatodea</taxon>
        <taxon>Austrophasmatidae</taxon>
        <taxon>Striatophasma</taxon>
    </lineage>
</organism>
<reference evidence="5" key="1">
    <citation type="journal article" date="2012" name="Syst. Biol.">
        <title>Peptidomics-based phylogeny and biogeography of Mantophasmatodea (Hexapoda).</title>
        <authorList>
            <person name="Predel R."/>
            <person name="Neupert S."/>
            <person name="Huetteroth W."/>
            <person name="Kahnt J."/>
            <person name="Waidelich D."/>
            <person name="Roth S."/>
        </authorList>
    </citation>
    <scope>PROTEIN SEQUENCE</scope>
    <source>
        <tissue evidence="3">Thoracic perisympathetic organs</tissue>
    </source>
</reference>
<name>FAR10_STRNA</name>
<dbReference type="GO" id="GO:0005576">
    <property type="term" value="C:extracellular region"/>
    <property type="evidence" value="ECO:0007669"/>
    <property type="project" value="UniProtKB-SubCell"/>
</dbReference>
<dbReference type="GO" id="GO:0007218">
    <property type="term" value="P:neuropeptide signaling pathway"/>
    <property type="evidence" value="ECO:0007669"/>
    <property type="project" value="UniProtKB-KW"/>
</dbReference>
<comment type="function">
    <text evidence="1">FMRFamides and FMRFamide-like peptides are neuropeptides.</text>
</comment>
<comment type="subcellular location">
    <subcellularLocation>
        <location evidence="6">Secreted</location>
    </subcellularLocation>
</comment>
<comment type="similarity">
    <text evidence="2">Belongs to the FARP (FMRF amide related peptide) family.</text>
</comment>
<feature type="peptide" id="PRO_0000420747" description="Extended FMRFamide-10" evidence="3">
    <location>
        <begin position="1"/>
        <end position="11"/>
    </location>
</feature>
<feature type="unsure residue" description="L or I" evidence="3">
    <location>
        <position position="8"/>
    </location>
</feature>
<sequence>PVPDSSFLRDP</sequence>
<accession>B0M3B4</accession>
<protein>
    <recommendedName>
        <fullName evidence="4">Extended FMRFamide-10</fullName>
        <shortName evidence="4">FMRFa-10</shortName>
    </recommendedName>
</protein>